<evidence type="ECO:0000255" key="1">
    <source>
        <dbReference type="HAMAP-Rule" id="MF_00210"/>
    </source>
</evidence>
<comment type="function">
    <text evidence="1">Catalyzes the transfer of the enolpyruvyl moiety of phosphoenolpyruvate (PEP) to the 5-hydroxyl of shikimate-3-phosphate (S3P) to produce enolpyruvyl shikimate-3-phosphate and inorganic phosphate.</text>
</comment>
<comment type="catalytic activity">
    <reaction evidence="1">
        <text>3-phosphoshikimate + phosphoenolpyruvate = 5-O-(1-carboxyvinyl)-3-phosphoshikimate + phosphate</text>
        <dbReference type="Rhea" id="RHEA:21256"/>
        <dbReference type="ChEBI" id="CHEBI:43474"/>
        <dbReference type="ChEBI" id="CHEBI:57701"/>
        <dbReference type="ChEBI" id="CHEBI:58702"/>
        <dbReference type="ChEBI" id="CHEBI:145989"/>
        <dbReference type="EC" id="2.5.1.19"/>
    </reaction>
    <physiologicalReaction direction="left-to-right" evidence="1">
        <dbReference type="Rhea" id="RHEA:21257"/>
    </physiologicalReaction>
</comment>
<comment type="pathway">
    <text evidence="1">Metabolic intermediate biosynthesis; chorismate biosynthesis; chorismate from D-erythrose 4-phosphate and phosphoenolpyruvate: step 6/7.</text>
</comment>
<comment type="subunit">
    <text evidence="1">Monomer.</text>
</comment>
<comment type="subcellular location">
    <subcellularLocation>
        <location evidence="1">Cytoplasm</location>
    </subcellularLocation>
</comment>
<comment type="similarity">
    <text evidence="1">Belongs to the EPSP synthase family.</text>
</comment>
<protein>
    <recommendedName>
        <fullName evidence="1">3-phosphoshikimate 1-carboxyvinyltransferase</fullName>
        <ecNumber evidence="1">2.5.1.19</ecNumber>
    </recommendedName>
    <alternativeName>
        <fullName evidence="1">5-enolpyruvylshikimate-3-phosphate synthase</fullName>
        <shortName evidence="1">EPSP synthase</shortName>
        <shortName evidence="1">EPSPS</shortName>
    </alternativeName>
</protein>
<sequence>MKERTIQPVNNGLNGNITIPGDKSISHRAVMFGAIAEGKTTIKGFLPGADCLSTISCFKEMGVDIVQNGDEVTVVGKGLEGLQEPKAILDVGNSGTTIRLMSGILANTPFFSCVQGDASIAKRPMKRVTNPLKQMGANIDGREEGTFTPLTIRGGDLKAIEYTSPVASAQVKSAILLAGLRAEGVTAVTEPHISRDHTERMLEAFGVKVTREGKTVKLAGGQKLTATDVQVPGDVSSAAFFLVAGAIIPNSKLVLQNVGMNPTRTGIIDVLEKMGATFTVEPINEGASEPAANITIETTSLKGIEIGGDIIPRLIDEIPVIALAATQAEGITVIKDAHELKVKETNRIDTVVAELTKLGARIEATDDGMIIYGKSALKGNTVNSYGDHRIGMMLAIAGCLAEGKTTIEDAEAVGVSYPTFFEELQRLTK</sequence>
<organism>
    <name type="scientific">Bacillus cereus (strain 03BB102)</name>
    <dbReference type="NCBI Taxonomy" id="572264"/>
    <lineage>
        <taxon>Bacteria</taxon>
        <taxon>Bacillati</taxon>
        <taxon>Bacillota</taxon>
        <taxon>Bacilli</taxon>
        <taxon>Bacillales</taxon>
        <taxon>Bacillaceae</taxon>
        <taxon>Bacillus</taxon>
        <taxon>Bacillus cereus group</taxon>
    </lineage>
</organism>
<reference key="1">
    <citation type="submission" date="2009-02" db="EMBL/GenBank/DDBJ databases">
        <title>Genome sequence of Bacillus cereus 03BB102.</title>
        <authorList>
            <person name="Dodson R.J."/>
            <person name="Jackson P."/>
            <person name="Munk A.C."/>
            <person name="Brettin T."/>
            <person name="Bruce D."/>
            <person name="Detter C."/>
            <person name="Tapia R."/>
            <person name="Han C."/>
            <person name="Sutton G."/>
            <person name="Sims D."/>
        </authorList>
    </citation>
    <scope>NUCLEOTIDE SEQUENCE [LARGE SCALE GENOMIC DNA]</scope>
    <source>
        <strain>03BB102</strain>
    </source>
</reference>
<proteinExistence type="inferred from homology"/>
<gene>
    <name evidence="1" type="primary">aroA</name>
    <name type="ordered locus">BCA_3025</name>
</gene>
<feature type="chain" id="PRO_1000124669" description="3-phosphoshikimate 1-carboxyvinyltransferase">
    <location>
        <begin position="1"/>
        <end position="429"/>
    </location>
</feature>
<feature type="active site" description="Proton acceptor" evidence="1">
    <location>
        <position position="316"/>
    </location>
</feature>
<feature type="binding site" evidence="1">
    <location>
        <position position="23"/>
    </location>
    <ligand>
        <name>3-phosphoshikimate</name>
        <dbReference type="ChEBI" id="CHEBI:145989"/>
    </ligand>
</feature>
<feature type="binding site" evidence="1">
    <location>
        <position position="23"/>
    </location>
    <ligand>
        <name>phosphoenolpyruvate</name>
        <dbReference type="ChEBI" id="CHEBI:58702"/>
    </ligand>
</feature>
<feature type="binding site" evidence="1">
    <location>
        <position position="24"/>
    </location>
    <ligand>
        <name>3-phosphoshikimate</name>
        <dbReference type="ChEBI" id="CHEBI:145989"/>
    </ligand>
</feature>
<feature type="binding site" evidence="1">
    <location>
        <position position="28"/>
    </location>
    <ligand>
        <name>3-phosphoshikimate</name>
        <dbReference type="ChEBI" id="CHEBI:145989"/>
    </ligand>
</feature>
<feature type="binding site" evidence="1">
    <location>
        <position position="95"/>
    </location>
    <ligand>
        <name>phosphoenolpyruvate</name>
        <dbReference type="ChEBI" id="CHEBI:58702"/>
    </ligand>
</feature>
<feature type="binding site" evidence="1">
    <location>
        <position position="123"/>
    </location>
    <ligand>
        <name>phosphoenolpyruvate</name>
        <dbReference type="ChEBI" id="CHEBI:58702"/>
    </ligand>
</feature>
<feature type="binding site" evidence="1">
    <location>
        <position position="168"/>
    </location>
    <ligand>
        <name>3-phosphoshikimate</name>
        <dbReference type="ChEBI" id="CHEBI:145989"/>
    </ligand>
</feature>
<feature type="binding site" evidence="1">
    <location>
        <position position="170"/>
    </location>
    <ligand>
        <name>3-phosphoshikimate</name>
        <dbReference type="ChEBI" id="CHEBI:145989"/>
    </ligand>
</feature>
<feature type="binding site" evidence="1">
    <location>
        <position position="170"/>
    </location>
    <ligand>
        <name>phosphoenolpyruvate</name>
        <dbReference type="ChEBI" id="CHEBI:58702"/>
    </ligand>
</feature>
<feature type="binding site" evidence="1">
    <location>
        <position position="316"/>
    </location>
    <ligand>
        <name>3-phosphoshikimate</name>
        <dbReference type="ChEBI" id="CHEBI:145989"/>
    </ligand>
</feature>
<feature type="binding site" evidence="1">
    <location>
        <position position="343"/>
    </location>
    <ligand>
        <name>3-phosphoshikimate</name>
        <dbReference type="ChEBI" id="CHEBI:145989"/>
    </ligand>
</feature>
<feature type="binding site" evidence="1">
    <location>
        <position position="347"/>
    </location>
    <ligand>
        <name>phosphoenolpyruvate</name>
        <dbReference type="ChEBI" id="CHEBI:58702"/>
    </ligand>
</feature>
<feature type="binding site" evidence="1">
    <location>
        <position position="389"/>
    </location>
    <ligand>
        <name>phosphoenolpyruvate</name>
        <dbReference type="ChEBI" id="CHEBI:58702"/>
    </ligand>
</feature>
<accession>C1EYX7</accession>
<keyword id="KW-0028">Amino-acid biosynthesis</keyword>
<keyword id="KW-0057">Aromatic amino acid biosynthesis</keyword>
<keyword id="KW-0963">Cytoplasm</keyword>
<keyword id="KW-0808">Transferase</keyword>
<name>AROA_BACC3</name>
<dbReference type="EC" id="2.5.1.19" evidence="1"/>
<dbReference type="EMBL" id="CP001407">
    <property type="protein sequence ID" value="ACO27272.1"/>
    <property type="molecule type" value="Genomic_DNA"/>
</dbReference>
<dbReference type="RefSeq" id="WP_000664605.1">
    <property type="nucleotide sequence ID" value="NC_012472.1"/>
</dbReference>
<dbReference type="SMR" id="C1EYX7"/>
<dbReference type="KEGG" id="bcx:BCA_3025"/>
<dbReference type="PATRIC" id="fig|572264.18.peg.2977"/>
<dbReference type="UniPathway" id="UPA00053">
    <property type="reaction ID" value="UER00089"/>
</dbReference>
<dbReference type="Proteomes" id="UP000002210">
    <property type="component" value="Chromosome"/>
</dbReference>
<dbReference type="GO" id="GO:0005737">
    <property type="term" value="C:cytoplasm"/>
    <property type="evidence" value="ECO:0007669"/>
    <property type="project" value="UniProtKB-SubCell"/>
</dbReference>
<dbReference type="GO" id="GO:0003866">
    <property type="term" value="F:3-phosphoshikimate 1-carboxyvinyltransferase activity"/>
    <property type="evidence" value="ECO:0007669"/>
    <property type="project" value="UniProtKB-UniRule"/>
</dbReference>
<dbReference type="GO" id="GO:0008652">
    <property type="term" value="P:amino acid biosynthetic process"/>
    <property type="evidence" value="ECO:0007669"/>
    <property type="project" value="UniProtKB-KW"/>
</dbReference>
<dbReference type="GO" id="GO:0009073">
    <property type="term" value="P:aromatic amino acid family biosynthetic process"/>
    <property type="evidence" value="ECO:0007669"/>
    <property type="project" value="UniProtKB-KW"/>
</dbReference>
<dbReference type="GO" id="GO:0009423">
    <property type="term" value="P:chorismate biosynthetic process"/>
    <property type="evidence" value="ECO:0007669"/>
    <property type="project" value="UniProtKB-UniRule"/>
</dbReference>
<dbReference type="CDD" id="cd01556">
    <property type="entry name" value="EPSP_synthase"/>
    <property type="match status" value="1"/>
</dbReference>
<dbReference type="FunFam" id="3.65.10.10:FF:000005">
    <property type="entry name" value="3-phosphoshikimate 1-carboxyvinyltransferase"/>
    <property type="match status" value="1"/>
</dbReference>
<dbReference type="Gene3D" id="3.65.10.10">
    <property type="entry name" value="Enolpyruvate transferase domain"/>
    <property type="match status" value="2"/>
</dbReference>
<dbReference type="HAMAP" id="MF_00210">
    <property type="entry name" value="EPSP_synth"/>
    <property type="match status" value="1"/>
</dbReference>
<dbReference type="InterPro" id="IPR001986">
    <property type="entry name" value="Enolpyruvate_Tfrase_dom"/>
</dbReference>
<dbReference type="InterPro" id="IPR036968">
    <property type="entry name" value="Enolpyruvate_Tfrase_sf"/>
</dbReference>
<dbReference type="InterPro" id="IPR006264">
    <property type="entry name" value="EPSP_synthase"/>
</dbReference>
<dbReference type="InterPro" id="IPR023193">
    <property type="entry name" value="EPSP_synthase_CS"/>
</dbReference>
<dbReference type="InterPro" id="IPR013792">
    <property type="entry name" value="RNA3'P_cycl/enolpyr_Trfase_a/b"/>
</dbReference>
<dbReference type="NCBIfam" id="TIGR01356">
    <property type="entry name" value="aroA"/>
    <property type="match status" value="1"/>
</dbReference>
<dbReference type="PANTHER" id="PTHR21090">
    <property type="entry name" value="AROM/DEHYDROQUINATE SYNTHASE"/>
    <property type="match status" value="1"/>
</dbReference>
<dbReference type="PANTHER" id="PTHR21090:SF5">
    <property type="entry name" value="PENTAFUNCTIONAL AROM POLYPEPTIDE"/>
    <property type="match status" value="1"/>
</dbReference>
<dbReference type="Pfam" id="PF00275">
    <property type="entry name" value="EPSP_synthase"/>
    <property type="match status" value="1"/>
</dbReference>
<dbReference type="PIRSF" id="PIRSF000505">
    <property type="entry name" value="EPSPS"/>
    <property type="match status" value="1"/>
</dbReference>
<dbReference type="SUPFAM" id="SSF55205">
    <property type="entry name" value="EPT/RTPC-like"/>
    <property type="match status" value="1"/>
</dbReference>
<dbReference type="PROSITE" id="PS00104">
    <property type="entry name" value="EPSP_SYNTHASE_1"/>
    <property type="match status" value="1"/>
</dbReference>
<dbReference type="PROSITE" id="PS00885">
    <property type="entry name" value="EPSP_SYNTHASE_2"/>
    <property type="match status" value="1"/>
</dbReference>